<keyword id="KW-0150">Chloroplast</keyword>
<keyword id="KW-0934">Plastid</keyword>
<keyword id="KW-1185">Reference proteome</keyword>
<keyword id="KW-0687">Ribonucleoprotein</keyword>
<keyword id="KW-0689">Ribosomal protein</keyword>
<keyword id="KW-0694">RNA-binding</keyword>
<keyword id="KW-0699">rRNA-binding</keyword>
<keyword id="KW-0809">Transit peptide</keyword>
<gene>
    <name type="primary">RPL21</name>
    <name type="ordered locus">At1g35680</name>
    <name type="ORF">F15O4.7</name>
</gene>
<feature type="transit peptide" description="Chloroplast" evidence="2">
    <location>
        <begin position="1"/>
        <end status="unknown"/>
    </location>
</feature>
<feature type="chain" id="PRO_0000030480" description="Large ribosomal subunit protein bL21c">
    <location>
        <begin status="unknown"/>
        <end position="220"/>
    </location>
</feature>
<name>RK21_ARATH</name>
<accession>P51412</accession>
<accession>Q9SMM2</accession>
<proteinExistence type="evidence at transcript level"/>
<comment type="function">
    <text evidence="1">This protein binds to 23S ribosomal RNA in the presence of protein L20.</text>
</comment>
<comment type="subunit">
    <text evidence="1">Part of the 50S ribosomal subunit.</text>
</comment>
<comment type="subcellular location">
    <subcellularLocation>
        <location>Plastid</location>
        <location>Chloroplast</location>
    </subcellularLocation>
</comment>
<comment type="similarity">
    <text evidence="4">Belongs to the bacterial ribosomal protein bL21 family.</text>
</comment>
<evidence type="ECO:0000250" key="1"/>
<evidence type="ECO:0000255" key="2"/>
<evidence type="ECO:0000303" key="3">
    <source>
    </source>
</evidence>
<evidence type="ECO:0000305" key="4"/>
<reference key="1">
    <citation type="submission" date="1996-01" db="EMBL/GenBank/DDBJ databases">
        <authorList>
            <person name="Rajasekhar V.K."/>
            <person name="Weihe A."/>
        </authorList>
    </citation>
    <scope>NUCLEOTIDE SEQUENCE [MRNA]</scope>
    <source>
        <strain>cv. Columbia</strain>
    </source>
</reference>
<reference key="2">
    <citation type="submission" date="1997-12" db="EMBL/GenBank/DDBJ databases">
        <authorList>
            <person name="Gallois J.-L."/>
            <person name="Bisanz C."/>
            <person name="Mache R."/>
        </authorList>
    </citation>
    <scope>NUCLEOTIDE SEQUENCE [GENOMIC DNA]</scope>
    <source>
        <strain>cv. Columbia</strain>
    </source>
</reference>
<reference key="3">
    <citation type="journal article" date="2000" name="Nature">
        <title>Sequence and analysis of chromosome 1 of the plant Arabidopsis thaliana.</title>
        <authorList>
            <person name="Theologis A."/>
            <person name="Ecker J.R."/>
            <person name="Palm C.J."/>
            <person name="Federspiel N.A."/>
            <person name="Kaul S."/>
            <person name="White O."/>
            <person name="Alonso J."/>
            <person name="Altafi H."/>
            <person name="Araujo R."/>
            <person name="Bowman C.L."/>
            <person name="Brooks S.Y."/>
            <person name="Buehler E."/>
            <person name="Chan A."/>
            <person name="Chao Q."/>
            <person name="Chen H."/>
            <person name="Cheuk R.F."/>
            <person name="Chin C.W."/>
            <person name="Chung M.K."/>
            <person name="Conn L."/>
            <person name="Conway A.B."/>
            <person name="Conway A.R."/>
            <person name="Creasy T.H."/>
            <person name="Dewar K."/>
            <person name="Dunn P."/>
            <person name="Etgu P."/>
            <person name="Feldblyum T.V."/>
            <person name="Feng J.-D."/>
            <person name="Fong B."/>
            <person name="Fujii C.Y."/>
            <person name="Gill J.E."/>
            <person name="Goldsmith A.D."/>
            <person name="Haas B."/>
            <person name="Hansen N.F."/>
            <person name="Hughes B."/>
            <person name="Huizar L."/>
            <person name="Hunter J.L."/>
            <person name="Jenkins J."/>
            <person name="Johnson-Hopson C."/>
            <person name="Khan S."/>
            <person name="Khaykin E."/>
            <person name="Kim C.J."/>
            <person name="Koo H.L."/>
            <person name="Kremenetskaia I."/>
            <person name="Kurtz D.B."/>
            <person name="Kwan A."/>
            <person name="Lam B."/>
            <person name="Langin-Hooper S."/>
            <person name="Lee A."/>
            <person name="Lee J.M."/>
            <person name="Lenz C.A."/>
            <person name="Li J.H."/>
            <person name="Li Y.-P."/>
            <person name="Lin X."/>
            <person name="Liu S.X."/>
            <person name="Liu Z.A."/>
            <person name="Luros J.S."/>
            <person name="Maiti R."/>
            <person name="Marziali A."/>
            <person name="Militscher J."/>
            <person name="Miranda M."/>
            <person name="Nguyen M."/>
            <person name="Nierman W.C."/>
            <person name="Osborne B.I."/>
            <person name="Pai G."/>
            <person name="Peterson J."/>
            <person name="Pham P.K."/>
            <person name="Rizzo M."/>
            <person name="Rooney T."/>
            <person name="Rowley D."/>
            <person name="Sakano H."/>
            <person name="Salzberg S.L."/>
            <person name="Schwartz J.R."/>
            <person name="Shinn P."/>
            <person name="Southwick A.M."/>
            <person name="Sun H."/>
            <person name="Tallon L.J."/>
            <person name="Tambunga G."/>
            <person name="Toriumi M.J."/>
            <person name="Town C.D."/>
            <person name="Utterback T."/>
            <person name="Van Aken S."/>
            <person name="Vaysberg M."/>
            <person name="Vysotskaia V.S."/>
            <person name="Walker M."/>
            <person name="Wu D."/>
            <person name="Yu G."/>
            <person name="Fraser C.M."/>
            <person name="Venter J.C."/>
            <person name="Davis R.W."/>
        </authorList>
    </citation>
    <scope>NUCLEOTIDE SEQUENCE [LARGE SCALE GENOMIC DNA]</scope>
    <source>
        <strain>cv. Columbia</strain>
    </source>
</reference>
<reference key="4">
    <citation type="journal article" date="2017" name="Plant J.">
        <title>Araport11: a complete reannotation of the Arabidopsis thaliana reference genome.</title>
        <authorList>
            <person name="Cheng C.Y."/>
            <person name="Krishnakumar V."/>
            <person name="Chan A.P."/>
            <person name="Thibaud-Nissen F."/>
            <person name="Schobel S."/>
            <person name="Town C.D."/>
        </authorList>
    </citation>
    <scope>GENOME REANNOTATION</scope>
    <source>
        <strain>cv. Columbia</strain>
    </source>
</reference>
<reference key="5">
    <citation type="journal article" date="2003" name="Science">
        <title>Empirical analysis of transcriptional activity in the Arabidopsis genome.</title>
        <authorList>
            <person name="Yamada K."/>
            <person name="Lim J."/>
            <person name="Dale J.M."/>
            <person name="Chen H."/>
            <person name="Shinn P."/>
            <person name="Palm C.J."/>
            <person name="Southwick A.M."/>
            <person name="Wu H.C."/>
            <person name="Kim C.J."/>
            <person name="Nguyen M."/>
            <person name="Pham P.K."/>
            <person name="Cheuk R.F."/>
            <person name="Karlin-Newmann G."/>
            <person name="Liu S.X."/>
            <person name="Lam B."/>
            <person name="Sakano H."/>
            <person name="Wu T."/>
            <person name="Yu G."/>
            <person name="Miranda M."/>
            <person name="Quach H.L."/>
            <person name="Tripp M."/>
            <person name="Chang C.H."/>
            <person name="Lee J.M."/>
            <person name="Toriumi M.J."/>
            <person name="Chan M.M."/>
            <person name="Tang C.C."/>
            <person name="Onodera C.S."/>
            <person name="Deng J.M."/>
            <person name="Akiyama K."/>
            <person name="Ansari Y."/>
            <person name="Arakawa T."/>
            <person name="Banh J."/>
            <person name="Banno F."/>
            <person name="Bowser L."/>
            <person name="Brooks S.Y."/>
            <person name="Carninci P."/>
            <person name="Chao Q."/>
            <person name="Choy N."/>
            <person name="Enju A."/>
            <person name="Goldsmith A.D."/>
            <person name="Gurjal M."/>
            <person name="Hansen N.F."/>
            <person name="Hayashizaki Y."/>
            <person name="Johnson-Hopson C."/>
            <person name="Hsuan V.W."/>
            <person name="Iida K."/>
            <person name="Karnes M."/>
            <person name="Khan S."/>
            <person name="Koesema E."/>
            <person name="Ishida J."/>
            <person name="Jiang P.X."/>
            <person name="Jones T."/>
            <person name="Kawai J."/>
            <person name="Kamiya A."/>
            <person name="Meyers C."/>
            <person name="Nakajima M."/>
            <person name="Narusaka M."/>
            <person name="Seki M."/>
            <person name="Sakurai T."/>
            <person name="Satou M."/>
            <person name="Tamse R."/>
            <person name="Vaysberg M."/>
            <person name="Wallender E.K."/>
            <person name="Wong C."/>
            <person name="Yamamura Y."/>
            <person name="Yuan S."/>
            <person name="Shinozaki K."/>
            <person name="Davis R.W."/>
            <person name="Theologis A."/>
            <person name="Ecker J.R."/>
        </authorList>
    </citation>
    <scope>NUCLEOTIDE SEQUENCE [LARGE SCALE MRNA]</scope>
    <source>
        <strain>cv. Columbia</strain>
    </source>
</reference>
<reference key="6">
    <citation type="journal article" date="2023" name="Plant Cell">
        <title>An updated nomenclature for plant ribosomal protein genes.</title>
        <authorList>
            <person name="Scarpin M.R."/>
            <person name="Busche M."/>
            <person name="Martinez R.E."/>
            <person name="Harper L.C."/>
            <person name="Reiser L."/>
            <person name="Szakonyi D."/>
            <person name="Merchante C."/>
            <person name="Lan T."/>
            <person name="Xiong W."/>
            <person name="Mo B."/>
            <person name="Tang G."/>
            <person name="Chen X."/>
            <person name="Bailey-Serres J."/>
            <person name="Browning K.S."/>
            <person name="Brunkard J.O."/>
        </authorList>
    </citation>
    <scope>NOMENCLATURE</scope>
</reference>
<protein>
    <recommendedName>
        <fullName evidence="3">Large ribosomal subunit protein bL21c</fullName>
    </recommendedName>
    <alternativeName>
        <fullName>50S ribosomal protein L21, chloroplastic</fullName>
    </alternativeName>
    <alternativeName>
        <fullName>CL21</fullName>
    </alternativeName>
</protein>
<sequence length="220" mass="24038">MASSSATLSLCSTFSAHCNVNSRRSSTILCSLSKPSLNLAKPLTGFLSPSTASTSRTAFTVAPKFAESVVEAEPETTDIEAVVVSDVSEVTEEKAKREEIFAVIMVGGRQYIVFPGRYLYTQRLKDANVDDQIVLNKVLLVGTKTHTYIGKPVVTNATVHAVVESQGLNDKVVVFKYKPKKKYRRNIGHRQPNTRIRITGITGYEEYPASPNVAVGEVNL</sequence>
<dbReference type="EMBL" id="Z49787">
    <property type="protein sequence ID" value="CAA89887.1"/>
    <property type="molecule type" value="mRNA"/>
</dbReference>
<dbReference type="EMBL" id="Y15964">
    <property type="protein sequence ID" value="CAB59360.2"/>
    <property type="molecule type" value="Genomic_DNA"/>
</dbReference>
<dbReference type="EMBL" id="AC007887">
    <property type="protein sequence ID" value="AAF79387.1"/>
    <property type="molecule type" value="Genomic_DNA"/>
</dbReference>
<dbReference type="EMBL" id="CP002684">
    <property type="protein sequence ID" value="AEE31823.1"/>
    <property type="molecule type" value="Genomic_DNA"/>
</dbReference>
<dbReference type="EMBL" id="AY058118">
    <property type="protein sequence ID" value="AAL25535.1"/>
    <property type="molecule type" value="mRNA"/>
</dbReference>
<dbReference type="EMBL" id="AF428363">
    <property type="protein sequence ID" value="AAL16293.1"/>
    <property type="molecule type" value="mRNA"/>
</dbReference>
<dbReference type="EMBL" id="AY116944">
    <property type="protein sequence ID" value="AAM51578.1"/>
    <property type="molecule type" value="mRNA"/>
</dbReference>
<dbReference type="PIR" id="S71282">
    <property type="entry name" value="S71282"/>
</dbReference>
<dbReference type="RefSeq" id="NP_174808.1">
    <property type="nucleotide sequence ID" value="NM_103272.4"/>
</dbReference>
<dbReference type="SMR" id="P51412"/>
<dbReference type="BioGRID" id="25704">
    <property type="interactions" value="46"/>
</dbReference>
<dbReference type="FunCoup" id="P51412">
    <property type="interactions" value="1971"/>
</dbReference>
<dbReference type="STRING" id="3702.P51412"/>
<dbReference type="PaxDb" id="3702-AT1G35680.1"/>
<dbReference type="ProteomicsDB" id="234706"/>
<dbReference type="EnsemblPlants" id="AT1G35680.1">
    <property type="protein sequence ID" value="AT1G35680.1"/>
    <property type="gene ID" value="AT1G35680"/>
</dbReference>
<dbReference type="GeneID" id="840472"/>
<dbReference type="Gramene" id="AT1G35680.1">
    <property type="protein sequence ID" value="AT1G35680.1"/>
    <property type="gene ID" value="AT1G35680"/>
</dbReference>
<dbReference type="KEGG" id="ath:AT1G35680"/>
<dbReference type="Araport" id="AT1G35680"/>
<dbReference type="TAIR" id="AT1G35680">
    <property type="gene designation" value="RPL21C"/>
</dbReference>
<dbReference type="eggNOG" id="KOG1686">
    <property type="taxonomic scope" value="Eukaryota"/>
</dbReference>
<dbReference type="HOGENOM" id="CLU_095152_0_0_1"/>
<dbReference type="InParanoid" id="P51412"/>
<dbReference type="OMA" id="LFATHCK"/>
<dbReference type="PhylomeDB" id="P51412"/>
<dbReference type="CD-CODE" id="4299E36E">
    <property type="entry name" value="Nucleolus"/>
</dbReference>
<dbReference type="PRO" id="PR:P51412"/>
<dbReference type="Proteomes" id="UP000006548">
    <property type="component" value="Chromosome 1"/>
</dbReference>
<dbReference type="ExpressionAtlas" id="P51412">
    <property type="expression patterns" value="baseline and differential"/>
</dbReference>
<dbReference type="GO" id="GO:0009507">
    <property type="term" value="C:chloroplast"/>
    <property type="evidence" value="ECO:0000314"/>
    <property type="project" value="TAIR"/>
</dbReference>
<dbReference type="GO" id="GO:0009941">
    <property type="term" value="C:chloroplast envelope"/>
    <property type="evidence" value="ECO:0007005"/>
    <property type="project" value="TAIR"/>
</dbReference>
<dbReference type="GO" id="GO:0009570">
    <property type="term" value="C:chloroplast stroma"/>
    <property type="evidence" value="ECO:0007005"/>
    <property type="project" value="TAIR"/>
</dbReference>
<dbReference type="GO" id="GO:0005634">
    <property type="term" value="C:nucleus"/>
    <property type="evidence" value="ECO:0007005"/>
    <property type="project" value="TAIR"/>
</dbReference>
<dbReference type="GO" id="GO:1990904">
    <property type="term" value="C:ribonucleoprotein complex"/>
    <property type="evidence" value="ECO:0007669"/>
    <property type="project" value="UniProtKB-KW"/>
</dbReference>
<dbReference type="GO" id="GO:0005840">
    <property type="term" value="C:ribosome"/>
    <property type="evidence" value="ECO:0007669"/>
    <property type="project" value="UniProtKB-KW"/>
</dbReference>
<dbReference type="GO" id="GO:0003729">
    <property type="term" value="F:mRNA binding"/>
    <property type="evidence" value="ECO:0000314"/>
    <property type="project" value="TAIR"/>
</dbReference>
<dbReference type="GO" id="GO:0019843">
    <property type="term" value="F:rRNA binding"/>
    <property type="evidence" value="ECO:0007669"/>
    <property type="project" value="UniProtKB-KW"/>
</dbReference>
<dbReference type="GO" id="GO:0003735">
    <property type="term" value="F:structural constituent of ribosome"/>
    <property type="evidence" value="ECO:0007669"/>
    <property type="project" value="InterPro"/>
</dbReference>
<dbReference type="GO" id="GO:0009658">
    <property type="term" value="P:chloroplast organization"/>
    <property type="evidence" value="ECO:0000315"/>
    <property type="project" value="TAIR"/>
</dbReference>
<dbReference type="GO" id="GO:0009793">
    <property type="term" value="P:embryo development ending in seed dormancy"/>
    <property type="evidence" value="ECO:0000315"/>
    <property type="project" value="TAIR"/>
</dbReference>
<dbReference type="GO" id="GO:0010027">
    <property type="term" value="P:thylakoid membrane organization"/>
    <property type="evidence" value="ECO:0000315"/>
    <property type="project" value="TAIR"/>
</dbReference>
<dbReference type="GO" id="GO:0006412">
    <property type="term" value="P:translation"/>
    <property type="evidence" value="ECO:0007669"/>
    <property type="project" value="InterPro"/>
</dbReference>
<dbReference type="HAMAP" id="MF_01363">
    <property type="entry name" value="Ribosomal_bL21"/>
    <property type="match status" value="1"/>
</dbReference>
<dbReference type="InterPro" id="IPR028909">
    <property type="entry name" value="bL21-like"/>
</dbReference>
<dbReference type="InterPro" id="IPR036164">
    <property type="entry name" value="bL21-like_sf"/>
</dbReference>
<dbReference type="InterPro" id="IPR001787">
    <property type="entry name" value="Ribosomal_bL21"/>
</dbReference>
<dbReference type="InterPro" id="IPR018258">
    <property type="entry name" value="Ribosomal_bL21_CS"/>
</dbReference>
<dbReference type="NCBIfam" id="TIGR00061">
    <property type="entry name" value="L21"/>
    <property type="match status" value="1"/>
</dbReference>
<dbReference type="PANTHER" id="PTHR21349">
    <property type="entry name" value="50S RIBOSOMAL PROTEIN L21"/>
    <property type="match status" value="1"/>
</dbReference>
<dbReference type="PANTHER" id="PTHR21349:SF8">
    <property type="entry name" value="LARGE RIBOSOMAL SUBUNIT PROTEIN BL21C"/>
    <property type="match status" value="1"/>
</dbReference>
<dbReference type="Pfam" id="PF00829">
    <property type="entry name" value="Ribosomal_L21p"/>
    <property type="match status" value="1"/>
</dbReference>
<dbReference type="SUPFAM" id="SSF141091">
    <property type="entry name" value="L21p-like"/>
    <property type="match status" value="1"/>
</dbReference>
<dbReference type="PROSITE" id="PS01169">
    <property type="entry name" value="RIBOSOMAL_L21"/>
    <property type="match status" value="1"/>
</dbReference>
<organism>
    <name type="scientific">Arabidopsis thaliana</name>
    <name type="common">Mouse-ear cress</name>
    <dbReference type="NCBI Taxonomy" id="3702"/>
    <lineage>
        <taxon>Eukaryota</taxon>
        <taxon>Viridiplantae</taxon>
        <taxon>Streptophyta</taxon>
        <taxon>Embryophyta</taxon>
        <taxon>Tracheophyta</taxon>
        <taxon>Spermatophyta</taxon>
        <taxon>Magnoliopsida</taxon>
        <taxon>eudicotyledons</taxon>
        <taxon>Gunneridae</taxon>
        <taxon>Pentapetalae</taxon>
        <taxon>rosids</taxon>
        <taxon>malvids</taxon>
        <taxon>Brassicales</taxon>
        <taxon>Brassicaceae</taxon>
        <taxon>Camelineae</taxon>
        <taxon>Arabidopsis</taxon>
    </lineage>
</organism>